<feature type="chain" id="PRO_1000024948" description="Quinolinate synthase">
    <location>
        <begin position="1"/>
        <end position="378"/>
    </location>
</feature>
<feature type="binding site" evidence="1">
    <location>
        <position position="59"/>
    </location>
    <ligand>
        <name>iminosuccinate</name>
        <dbReference type="ChEBI" id="CHEBI:77875"/>
    </ligand>
</feature>
<feature type="binding site" evidence="1">
    <location>
        <position position="80"/>
    </location>
    <ligand>
        <name>iminosuccinate</name>
        <dbReference type="ChEBI" id="CHEBI:77875"/>
    </ligand>
</feature>
<feature type="binding site" evidence="1">
    <location>
        <position position="125"/>
    </location>
    <ligand>
        <name>[4Fe-4S] cluster</name>
        <dbReference type="ChEBI" id="CHEBI:49883"/>
    </ligand>
</feature>
<feature type="binding site" evidence="1">
    <location>
        <begin position="151"/>
        <end position="153"/>
    </location>
    <ligand>
        <name>iminosuccinate</name>
        <dbReference type="ChEBI" id="CHEBI:77875"/>
    </ligand>
</feature>
<feature type="binding site" evidence="1">
    <location>
        <position position="168"/>
    </location>
    <ligand>
        <name>iminosuccinate</name>
        <dbReference type="ChEBI" id="CHEBI:77875"/>
    </ligand>
</feature>
<feature type="binding site" evidence="1">
    <location>
        <position position="212"/>
    </location>
    <ligand>
        <name>[4Fe-4S] cluster</name>
        <dbReference type="ChEBI" id="CHEBI:49883"/>
    </ligand>
</feature>
<feature type="binding site" evidence="1">
    <location>
        <begin position="238"/>
        <end position="240"/>
    </location>
    <ligand>
        <name>iminosuccinate</name>
        <dbReference type="ChEBI" id="CHEBI:77875"/>
    </ligand>
</feature>
<feature type="binding site" evidence="1">
    <location>
        <position position="255"/>
    </location>
    <ligand>
        <name>iminosuccinate</name>
        <dbReference type="ChEBI" id="CHEBI:77875"/>
    </ligand>
</feature>
<feature type="binding site" evidence="1">
    <location>
        <position position="309"/>
    </location>
    <ligand>
        <name>[4Fe-4S] cluster</name>
        <dbReference type="ChEBI" id="CHEBI:49883"/>
    </ligand>
</feature>
<protein>
    <recommendedName>
        <fullName evidence="1">Quinolinate synthase</fullName>
        <ecNumber evidence="1">2.5.1.72</ecNumber>
    </recommendedName>
</protein>
<sequence>MQSAIKSVEYDRPLAAGAACGVGEAWAKVPDALAPDERDALKARIKALLVREKAVLVAHYYVDADLQALADETGGCVADSLEMARFGRDHDAHTLVVAGVRFMGETAKILSPGKRVLMPDLDATCSLDLGCLVDEFSQFCDAHPERTVVVYANTSAAVKARADWMVTSSIGLEIVADLHARGEKIIWAPDRHLGGYIQKKTGADMLMWQGSCLVHDEFKGIELDLLRREYPDAKILVHPESPEGVVALADVVGSTTQLIDAAVKLDAQRFIVATDLGILHKMRLAAPGKTFIEAPTAGNSATCKSCAHCPWMAMNALSNLADVLERGHNEIFVEAAIAQRARMPIDRMLDFAARHKQRVQASGDLQRDQALFANVGAA</sequence>
<proteinExistence type="inferred from homology"/>
<keyword id="KW-0004">4Fe-4S</keyword>
<keyword id="KW-0963">Cytoplasm</keyword>
<keyword id="KW-0408">Iron</keyword>
<keyword id="KW-0411">Iron-sulfur</keyword>
<keyword id="KW-0479">Metal-binding</keyword>
<keyword id="KW-0662">Pyridine nucleotide biosynthesis</keyword>
<keyword id="KW-0808">Transferase</keyword>
<gene>
    <name evidence="1" type="primary">nadA</name>
    <name type="ordered locus">BURPS1106A_0978</name>
</gene>
<comment type="function">
    <text evidence="1">Catalyzes the condensation of iminoaspartate with dihydroxyacetone phosphate to form quinolinate.</text>
</comment>
<comment type="catalytic activity">
    <reaction evidence="1">
        <text>iminosuccinate + dihydroxyacetone phosphate = quinolinate + phosphate + 2 H2O + H(+)</text>
        <dbReference type="Rhea" id="RHEA:25888"/>
        <dbReference type="ChEBI" id="CHEBI:15377"/>
        <dbReference type="ChEBI" id="CHEBI:15378"/>
        <dbReference type="ChEBI" id="CHEBI:29959"/>
        <dbReference type="ChEBI" id="CHEBI:43474"/>
        <dbReference type="ChEBI" id="CHEBI:57642"/>
        <dbReference type="ChEBI" id="CHEBI:77875"/>
        <dbReference type="EC" id="2.5.1.72"/>
    </reaction>
    <physiologicalReaction direction="left-to-right" evidence="1">
        <dbReference type="Rhea" id="RHEA:25889"/>
    </physiologicalReaction>
</comment>
<comment type="cofactor">
    <cofactor evidence="1">
        <name>[4Fe-4S] cluster</name>
        <dbReference type="ChEBI" id="CHEBI:49883"/>
    </cofactor>
    <text evidence="1">Binds 1 [4Fe-4S] cluster per subunit.</text>
</comment>
<comment type="pathway">
    <text evidence="1">Cofactor biosynthesis; NAD(+) biosynthesis; quinolinate from iminoaspartate: step 1/1.</text>
</comment>
<comment type="subcellular location">
    <subcellularLocation>
        <location evidence="1">Cytoplasm</location>
    </subcellularLocation>
</comment>
<comment type="similarity">
    <text evidence="1">Belongs to the quinolinate synthase family. Type 1 subfamily.</text>
</comment>
<dbReference type="EC" id="2.5.1.72" evidence="1"/>
<dbReference type="EMBL" id="CP000572">
    <property type="protein sequence ID" value="ABN88944.1"/>
    <property type="molecule type" value="Genomic_DNA"/>
</dbReference>
<dbReference type="RefSeq" id="WP_004536283.1">
    <property type="nucleotide sequence ID" value="NC_009076.1"/>
</dbReference>
<dbReference type="SMR" id="A3NSD8"/>
<dbReference type="KEGG" id="bpl:BURPS1106A_0978"/>
<dbReference type="HOGENOM" id="CLU_047382_1_0_4"/>
<dbReference type="UniPathway" id="UPA00253">
    <property type="reaction ID" value="UER00327"/>
</dbReference>
<dbReference type="Proteomes" id="UP000006738">
    <property type="component" value="Chromosome I"/>
</dbReference>
<dbReference type="GO" id="GO:0005829">
    <property type="term" value="C:cytosol"/>
    <property type="evidence" value="ECO:0007669"/>
    <property type="project" value="TreeGrafter"/>
</dbReference>
<dbReference type="GO" id="GO:0051539">
    <property type="term" value="F:4 iron, 4 sulfur cluster binding"/>
    <property type="evidence" value="ECO:0007669"/>
    <property type="project" value="UniProtKB-KW"/>
</dbReference>
<dbReference type="GO" id="GO:0046872">
    <property type="term" value="F:metal ion binding"/>
    <property type="evidence" value="ECO:0007669"/>
    <property type="project" value="UniProtKB-KW"/>
</dbReference>
<dbReference type="GO" id="GO:0008987">
    <property type="term" value="F:quinolinate synthetase A activity"/>
    <property type="evidence" value="ECO:0007669"/>
    <property type="project" value="UniProtKB-UniRule"/>
</dbReference>
<dbReference type="GO" id="GO:0034628">
    <property type="term" value="P:'de novo' NAD biosynthetic process from L-aspartate"/>
    <property type="evidence" value="ECO:0007669"/>
    <property type="project" value="TreeGrafter"/>
</dbReference>
<dbReference type="FunFam" id="3.40.50.10800:FF:000001">
    <property type="entry name" value="Quinolinate synthase A"/>
    <property type="match status" value="1"/>
</dbReference>
<dbReference type="FunFam" id="3.40.50.10800:FF:000003">
    <property type="entry name" value="Quinolinate synthase A"/>
    <property type="match status" value="1"/>
</dbReference>
<dbReference type="Gene3D" id="3.40.50.10800">
    <property type="entry name" value="NadA-like"/>
    <property type="match status" value="3"/>
</dbReference>
<dbReference type="HAMAP" id="MF_00567">
    <property type="entry name" value="NadA_type1"/>
    <property type="match status" value="1"/>
</dbReference>
<dbReference type="InterPro" id="IPR003473">
    <property type="entry name" value="NadA"/>
</dbReference>
<dbReference type="InterPro" id="IPR036094">
    <property type="entry name" value="NadA_sf"/>
</dbReference>
<dbReference type="InterPro" id="IPR023513">
    <property type="entry name" value="Quinolinate_synth_A_type1"/>
</dbReference>
<dbReference type="NCBIfam" id="TIGR00550">
    <property type="entry name" value="nadA"/>
    <property type="match status" value="1"/>
</dbReference>
<dbReference type="NCBIfam" id="NF006877">
    <property type="entry name" value="PRK09375.1-1"/>
    <property type="match status" value="1"/>
</dbReference>
<dbReference type="NCBIfam" id="NF006878">
    <property type="entry name" value="PRK09375.1-2"/>
    <property type="match status" value="1"/>
</dbReference>
<dbReference type="PANTHER" id="PTHR30573:SF0">
    <property type="entry name" value="QUINOLINATE SYNTHASE, CHLOROPLASTIC"/>
    <property type="match status" value="1"/>
</dbReference>
<dbReference type="PANTHER" id="PTHR30573">
    <property type="entry name" value="QUINOLINATE SYNTHETASE A"/>
    <property type="match status" value="1"/>
</dbReference>
<dbReference type="Pfam" id="PF02445">
    <property type="entry name" value="NadA"/>
    <property type="match status" value="1"/>
</dbReference>
<dbReference type="SUPFAM" id="SSF142754">
    <property type="entry name" value="NadA-like"/>
    <property type="match status" value="1"/>
</dbReference>
<evidence type="ECO:0000255" key="1">
    <source>
        <dbReference type="HAMAP-Rule" id="MF_00567"/>
    </source>
</evidence>
<organism>
    <name type="scientific">Burkholderia pseudomallei (strain 1106a)</name>
    <dbReference type="NCBI Taxonomy" id="357348"/>
    <lineage>
        <taxon>Bacteria</taxon>
        <taxon>Pseudomonadati</taxon>
        <taxon>Pseudomonadota</taxon>
        <taxon>Betaproteobacteria</taxon>
        <taxon>Burkholderiales</taxon>
        <taxon>Burkholderiaceae</taxon>
        <taxon>Burkholderia</taxon>
        <taxon>pseudomallei group</taxon>
    </lineage>
</organism>
<name>NADA_BURP0</name>
<reference key="1">
    <citation type="journal article" date="2010" name="Genome Biol. Evol.">
        <title>Continuing evolution of Burkholderia mallei through genome reduction and large-scale rearrangements.</title>
        <authorList>
            <person name="Losada L."/>
            <person name="Ronning C.M."/>
            <person name="DeShazer D."/>
            <person name="Woods D."/>
            <person name="Fedorova N."/>
            <person name="Kim H.S."/>
            <person name="Shabalina S.A."/>
            <person name="Pearson T.R."/>
            <person name="Brinkac L."/>
            <person name="Tan P."/>
            <person name="Nandi T."/>
            <person name="Crabtree J."/>
            <person name="Badger J."/>
            <person name="Beckstrom-Sternberg S."/>
            <person name="Saqib M."/>
            <person name="Schutzer S.E."/>
            <person name="Keim P."/>
            <person name="Nierman W.C."/>
        </authorList>
    </citation>
    <scope>NUCLEOTIDE SEQUENCE [LARGE SCALE GENOMIC DNA]</scope>
    <source>
        <strain>1106a</strain>
    </source>
</reference>
<accession>A3NSD8</accession>